<sequence>MAEKYPLQAGDPCVTLTEEDIWDVERLCLEELRVLLVSHLKSHKHLDHLRAKKILSREDAEEVSSRATSRSRAGLLVDMCQDHPRGFQCLKESCKNEVGQEHLVDLLERAFEKHCGDKLTQKWWESGADGRNPRRPPGSEDNSGYTALLPTNPSGGGPSIGSGHSRPRGRDDSGGIGGGVYPFSHGGARVVGGGWGGWGESGGAGRGGSLLSGGHGGHPPHGGPGGGGRDYYGGGGSGYYESIPEPANFPNSGGGGRGGGVRYDAGGDGRLGGLPPDPQEVDDPSLSVQGRGGPAPDPPSPPLRTRRFFCC</sequence>
<evidence type="ECO:0000255" key="1">
    <source>
        <dbReference type="PROSITE-ProRule" id="PRU00046"/>
    </source>
</evidence>
<evidence type="ECO:0000256" key="2">
    <source>
        <dbReference type="SAM" id="MobiDB-lite"/>
    </source>
</evidence>
<evidence type="ECO:0000269" key="3">
    <source>
    </source>
</evidence>
<evidence type="ECO:0000269" key="4">
    <source>
    </source>
</evidence>
<feature type="chain" id="PRO_0000405984" description="CARD domain-containing protein E10">
    <location>
        <begin position="1"/>
        <end position="311"/>
    </location>
</feature>
<feature type="domain" description="CARD" evidence="1">
    <location>
        <begin position="21"/>
        <end position="110"/>
    </location>
</feature>
<feature type="region of interest" description="Disordered" evidence="2">
    <location>
        <begin position="125"/>
        <end position="181"/>
    </location>
</feature>
<feature type="region of interest" description="Disordered" evidence="2">
    <location>
        <begin position="203"/>
        <end position="230"/>
    </location>
</feature>
<feature type="region of interest" description="Disordered" evidence="2">
    <location>
        <begin position="243"/>
        <end position="311"/>
    </location>
</feature>
<feature type="compositionally biased region" description="Polar residues" evidence="2">
    <location>
        <begin position="140"/>
        <end position="152"/>
    </location>
</feature>
<feature type="compositionally biased region" description="Gly residues" evidence="2">
    <location>
        <begin position="252"/>
        <end position="272"/>
    </location>
</feature>
<feature type="mutagenesis site" description="Loss of host plasma membrane localization." evidence="4">
    <original>C</original>
    <variation>A</variation>
    <location>
        <position position="310"/>
    </location>
</feature>
<feature type="mutagenesis site" description="Loss of host plasma membrane localization." evidence="4">
    <original>C</original>
    <variation>A</variation>
    <location>
        <position position="311"/>
    </location>
</feature>
<organismHost>
    <name type="scientific">Equus caballus</name>
    <name type="common">Horse</name>
    <dbReference type="NCBI Taxonomy" id="9796"/>
</organismHost>
<reference key="1">
    <citation type="journal article" date="1995" name="J. Mol. Biol.">
        <title>The DNA sequence of equine herpesvirus 2.</title>
        <authorList>
            <person name="Telford E.A.R."/>
            <person name="Watson M.S."/>
            <person name="Aird H.C."/>
            <person name="Perry J."/>
            <person name="Davison A.J."/>
        </authorList>
    </citation>
    <scope>NUCLEOTIDE SEQUENCE [LARGE SCALE GENOMIC DNA]</scope>
</reference>
<reference key="2">
    <citation type="submission" date="2015-01" db="EMBL/GenBank/DDBJ databases">
        <authorList>
            <person name="Davison A.J."/>
        </authorList>
    </citation>
    <scope>SEQUENCE REVISION</scope>
</reference>
<reference key="3">
    <citation type="journal article" date="1999" name="J. Biol. Chem.">
        <title>Equine herpesvirus-2 E10 gene product, but not its cellular homologue, activates NF-kappaB transcription factor and c-Jun N-terminal kinase.</title>
        <authorList>
            <person name="Thome M."/>
            <person name="Martinon F."/>
            <person name="Hofmann K."/>
            <person name="Rubio V."/>
            <person name="Steiner V."/>
            <person name="Schneider P."/>
            <person name="Mattmann C."/>
            <person name="Tschopp J."/>
        </authorList>
    </citation>
    <scope>FUNCTION</scope>
</reference>
<reference key="4">
    <citation type="journal article" date="2001" name="J. Cell Biol.">
        <title>Equine herpesvirus protein E10 induces membrane recruitment and phosphorylation of its cellular homologue, bcl-10.</title>
        <authorList>
            <person name="Thome M."/>
            <person name="Gaide O."/>
            <person name="Micheau O."/>
            <person name="Martinon F."/>
            <person name="Bonnet D."/>
            <person name="Gonzalez M."/>
            <person name="Tschopp J."/>
        </authorList>
    </citation>
    <scope>FUNCTION</scope>
    <scope>SUBCELLULAR LOCATION</scope>
    <scope>MUTAGENESIS OF CYS-310 AND CYS-311</scope>
</reference>
<organism>
    <name type="scientific">Equine herpesvirus 2 (strain 86/87)</name>
    <name type="common">EHV-2</name>
    <dbReference type="NCBI Taxonomy" id="82831"/>
    <lineage>
        <taxon>Viruses</taxon>
        <taxon>Duplodnaviria</taxon>
        <taxon>Heunggongvirae</taxon>
        <taxon>Peploviricota</taxon>
        <taxon>Herviviricetes</taxon>
        <taxon>Herpesvirales</taxon>
        <taxon>Orthoherpesviridae</taxon>
        <taxon>Gammaherpesvirinae</taxon>
        <taxon>Percavirus</taxon>
        <taxon>Percavirus equidgamma2</taxon>
        <taxon>Equid gammaherpesvirus 2</taxon>
    </lineage>
</organism>
<keyword id="KW-1074">Activation of host NF-kappa-B by virus</keyword>
<keyword id="KW-1032">Host cell membrane</keyword>
<keyword id="KW-1043">Host membrane</keyword>
<keyword id="KW-0945">Host-virus interaction</keyword>
<keyword id="KW-0472">Membrane</keyword>
<keyword id="KW-1185">Reference proteome</keyword>
<comment type="function">
    <text evidence="3 4">Activates host NF-kappa-B and JNK pathways. Induces hyperphosphorylation and redistribution of host bcl-10 from the cytoplasm to the plasma membrane. The inhibitory effect of cellular bcl-10 on NF-kappa-B pathway is then overcome allowing NF-kappa-B activation.</text>
</comment>
<comment type="interaction">
    <interactant intactId="EBI-11709474">
        <id>Q66677</id>
    </interactant>
    <interactant intactId="EBI-958922">
        <id>O95999</id>
        <label>BCL10</label>
    </interactant>
    <organismsDiffer>true</organismsDiffer>
    <experiments>2</experiments>
</comment>
<comment type="interaction">
    <interactant intactId="EBI-11709474">
        <id>Q66677</id>
    </interactant>
    <interactant intactId="EBI-8545413">
        <id>Q9Z0H7</id>
        <label>Bcl10</label>
    </interactant>
    <organismsDiffer>true</organismsDiffer>
    <experiments>3</experiments>
</comment>
<comment type="subcellular location">
    <subcellularLocation>
        <location evidence="4">Host cell membrane</location>
    </subcellularLocation>
    <text>E10 does not contain a putative transmembrane and must therefore be targeted to the plasma membrane in a different manner. The two cysteines located on the C-terminal region are essential for the protein localization and constitute a consensus site for geranylgeranylation.</text>
</comment>
<gene>
    <name type="primary">E10</name>
</gene>
<accession>Q66677</accession>
<name>VCLAP_EHV2</name>
<proteinExistence type="evidence at protein level"/>
<dbReference type="EMBL" id="U20824">
    <property type="protein sequence ID" value="AAC13865.2"/>
    <property type="molecule type" value="Genomic_DNA"/>
</dbReference>
<dbReference type="PIR" id="S55671">
    <property type="entry name" value="S55671"/>
</dbReference>
<dbReference type="RefSeq" id="NP_042674.2">
    <property type="nucleotide sequence ID" value="NC_001650.2"/>
</dbReference>
<dbReference type="SMR" id="Q66677"/>
<dbReference type="IntAct" id="Q66677">
    <property type="interactions" value="3"/>
</dbReference>
<dbReference type="GeneID" id="1461015"/>
<dbReference type="KEGG" id="vg:1461015"/>
<dbReference type="Proteomes" id="UP000007083">
    <property type="component" value="Segment"/>
</dbReference>
<dbReference type="GO" id="GO:0032449">
    <property type="term" value="C:CBM complex"/>
    <property type="evidence" value="ECO:0007669"/>
    <property type="project" value="TreeGrafter"/>
</dbReference>
<dbReference type="GO" id="GO:0020002">
    <property type="term" value="C:host cell plasma membrane"/>
    <property type="evidence" value="ECO:0000314"/>
    <property type="project" value="AgBase"/>
</dbReference>
<dbReference type="GO" id="GO:0016020">
    <property type="term" value="C:membrane"/>
    <property type="evidence" value="ECO:0007669"/>
    <property type="project" value="UniProtKB-KW"/>
</dbReference>
<dbReference type="GO" id="GO:0019209">
    <property type="term" value="F:kinase activator activity"/>
    <property type="evidence" value="ECO:0007669"/>
    <property type="project" value="TreeGrafter"/>
</dbReference>
<dbReference type="GO" id="GO:0051059">
    <property type="term" value="F:NF-kappaB binding"/>
    <property type="evidence" value="ECO:0007669"/>
    <property type="project" value="TreeGrafter"/>
</dbReference>
<dbReference type="GO" id="GO:0043422">
    <property type="term" value="F:protein kinase B binding"/>
    <property type="evidence" value="ECO:0007669"/>
    <property type="project" value="TreeGrafter"/>
</dbReference>
<dbReference type="GO" id="GO:0003713">
    <property type="term" value="F:transcription coactivator activity"/>
    <property type="evidence" value="ECO:0007669"/>
    <property type="project" value="TreeGrafter"/>
</dbReference>
<dbReference type="GO" id="GO:2001238">
    <property type="term" value="P:positive regulation of extrinsic apoptotic signaling pathway"/>
    <property type="evidence" value="ECO:0007669"/>
    <property type="project" value="TreeGrafter"/>
</dbReference>
<dbReference type="GO" id="GO:0085033">
    <property type="term" value="P:symbiont-mediated activation of host NF-kappaB cascade"/>
    <property type="evidence" value="ECO:0000314"/>
    <property type="project" value="AgBase"/>
</dbReference>
<dbReference type="Gene3D" id="1.10.533.10">
    <property type="entry name" value="Death Domain, Fas"/>
    <property type="match status" value="1"/>
</dbReference>
<dbReference type="InterPro" id="IPR033238">
    <property type="entry name" value="BCL10/E10"/>
</dbReference>
<dbReference type="InterPro" id="IPR001315">
    <property type="entry name" value="CARD"/>
</dbReference>
<dbReference type="InterPro" id="IPR011029">
    <property type="entry name" value="DEATH-like_dom_sf"/>
</dbReference>
<dbReference type="PANTHER" id="PTHR34920">
    <property type="entry name" value="B-CELL LYMPHOMA/LEUKEMIA 10"/>
    <property type="match status" value="1"/>
</dbReference>
<dbReference type="PANTHER" id="PTHR34920:SF1">
    <property type="entry name" value="B-CELL LYMPHOMA_LEUKEMIA 10"/>
    <property type="match status" value="1"/>
</dbReference>
<dbReference type="Pfam" id="PF00619">
    <property type="entry name" value="CARD"/>
    <property type="match status" value="1"/>
</dbReference>
<dbReference type="SUPFAM" id="SSF47986">
    <property type="entry name" value="DEATH domain"/>
    <property type="match status" value="1"/>
</dbReference>
<dbReference type="PROSITE" id="PS50209">
    <property type="entry name" value="CARD"/>
    <property type="match status" value="1"/>
</dbReference>
<protein>
    <recommendedName>
        <fullName>CARD domain-containing protein E10</fullName>
    </recommendedName>
</protein>